<accession>F6ULY1</accession>
<accession>B2RUM4</accession>
<accession>E9Q6A8</accession>
<accession>Q5DQU6</accession>
<reference key="1">
    <citation type="journal article" date="2005" name="Biochem. Biophys. Res. Commun.">
        <title>The evolution of a genetic locus encoding small serine proteinase inhibitors.</title>
        <authorList>
            <person name="Clauss A."/>
            <person name="Lilja H."/>
            <person name="Lundwall A."/>
        </authorList>
    </citation>
    <scope>NUCLEOTIDE SEQUENCE [MRNA]</scope>
    <source>
        <strain>C57BL/6J</strain>
    </source>
</reference>
<reference key="2">
    <citation type="journal article" date="2009" name="PLoS Biol.">
        <title>Lineage-specific biology revealed by a finished genome assembly of the mouse.</title>
        <authorList>
            <person name="Church D.M."/>
            <person name="Goodstadt L."/>
            <person name="Hillier L.W."/>
            <person name="Zody M.C."/>
            <person name="Goldstein S."/>
            <person name="She X."/>
            <person name="Bult C.J."/>
            <person name="Agarwala R."/>
            <person name="Cherry J.L."/>
            <person name="DiCuccio M."/>
            <person name="Hlavina W."/>
            <person name="Kapustin Y."/>
            <person name="Meric P."/>
            <person name="Maglott D."/>
            <person name="Birtle Z."/>
            <person name="Marques A.C."/>
            <person name="Graves T."/>
            <person name="Zhou S."/>
            <person name="Teague B."/>
            <person name="Potamousis K."/>
            <person name="Churas C."/>
            <person name="Place M."/>
            <person name="Herschleb J."/>
            <person name="Runnheim R."/>
            <person name="Forrest D."/>
            <person name="Amos-Landgraf J."/>
            <person name="Schwartz D.C."/>
            <person name="Cheng Z."/>
            <person name="Lindblad-Toh K."/>
            <person name="Eichler E.E."/>
            <person name="Ponting C.P."/>
        </authorList>
    </citation>
    <scope>NUCLEOTIDE SEQUENCE [LARGE SCALE GENOMIC DNA]</scope>
    <source>
        <strain>C57BL/6J</strain>
    </source>
</reference>
<reference key="3">
    <citation type="journal article" date="2004" name="Genome Res.">
        <title>The status, quality, and expansion of the NIH full-length cDNA project: the Mammalian Gene Collection (MGC).</title>
        <authorList>
            <consortium name="The MGC Project Team"/>
        </authorList>
    </citation>
    <scope>NUCLEOTIDE SEQUENCE [LARGE SCALE MRNA]</scope>
    <source>
        <tissue>Brain</tissue>
    </source>
</reference>
<evidence type="ECO:0000250" key="1"/>
<evidence type="ECO:0000255" key="2"/>
<evidence type="ECO:0000255" key="3">
    <source>
        <dbReference type="PROSITE-ProRule" id="PRU00031"/>
    </source>
</evidence>
<evidence type="ECO:0000255" key="4">
    <source>
        <dbReference type="PROSITE-ProRule" id="PRU00722"/>
    </source>
</evidence>
<evidence type="ECO:0000305" key="5"/>
<protein>
    <recommendedName>
        <fullName>WAP four-disulfide core domain protein 6B</fullName>
    </recommendedName>
    <alternativeName>
        <fullName>Putative protease inhibitor WAP6B</fullName>
    </alternativeName>
</protein>
<name>WFC6B_MOUSE</name>
<proteinExistence type="evidence at transcript level"/>
<organism>
    <name type="scientific">Mus musculus</name>
    <name type="common">Mouse</name>
    <dbReference type="NCBI Taxonomy" id="10090"/>
    <lineage>
        <taxon>Eukaryota</taxon>
        <taxon>Metazoa</taxon>
        <taxon>Chordata</taxon>
        <taxon>Craniata</taxon>
        <taxon>Vertebrata</taxon>
        <taxon>Euteleostomi</taxon>
        <taxon>Mammalia</taxon>
        <taxon>Eutheria</taxon>
        <taxon>Euarchontoglires</taxon>
        <taxon>Glires</taxon>
        <taxon>Rodentia</taxon>
        <taxon>Myomorpha</taxon>
        <taxon>Muroidea</taxon>
        <taxon>Muridae</taxon>
        <taxon>Murinae</taxon>
        <taxon>Mus</taxon>
        <taxon>Mus</taxon>
    </lineage>
</organism>
<gene>
    <name type="primary">Wfdc6b</name>
    <name type="synonym">Wfdc6</name>
</gene>
<sequence>MPPNRLLLPKMRLWGLLPFLVPFILLWSIQEPALAEGVFIRTCPKYNKIKCDFEERNQCLRHRECPGEERCCLFACGRKCLDLSEDICSLPQDAGPCLAYLPRWWYNQDTKLCIEFIYGGCQGNPNNFESKAVCTSICINKRKMSSWI</sequence>
<feature type="signal peptide" evidence="2">
    <location>
        <begin position="1"/>
        <end position="35"/>
    </location>
</feature>
<feature type="chain" id="PRO_0000415852" description="WAP four-disulfide core domain protein 6B">
    <location>
        <begin position="36"/>
        <end position="148"/>
    </location>
</feature>
<feature type="domain" description="WAP" evidence="4">
    <location>
        <begin position="37"/>
        <end position="84"/>
    </location>
</feature>
<feature type="domain" description="BPTI/Kunitz inhibitor" evidence="3">
    <location>
        <begin position="88"/>
        <end position="138"/>
    </location>
</feature>
<feature type="disulfide bond" evidence="1">
    <location>
        <begin position="43"/>
        <end position="72"/>
    </location>
</feature>
<feature type="disulfide bond" evidence="1">
    <location>
        <begin position="51"/>
        <end position="76"/>
    </location>
</feature>
<feature type="disulfide bond" evidence="1">
    <location>
        <begin position="59"/>
        <end position="71"/>
    </location>
</feature>
<feature type="disulfide bond" evidence="1">
    <location>
        <begin position="65"/>
        <end position="80"/>
    </location>
</feature>
<feature type="disulfide bond" evidence="1">
    <location>
        <begin position="88"/>
        <end position="138"/>
    </location>
</feature>
<feature type="disulfide bond" evidence="1">
    <location>
        <begin position="97"/>
        <end position="121"/>
    </location>
</feature>
<feature type="disulfide bond" evidence="1">
    <location>
        <begin position="113"/>
        <end position="134"/>
    </location>
</feature>
<feature type="sequence conflict" description="In Ref. 3; AAI41217." evidence="5" ref="3">
    <original>I</original>
    <variation>V</variation>
    <location>
        <position position="87"/>
    </location>
</feature>
<dbReference type="EMBL" id="AY541526">
    <property type="protein sequence ID" value="AAT07038.1"/>
    <property type="status" value="ALT_INIT"/>
    <property type="molecule type" value="mRNA"/>
</dbReference>
<dbReference type="EMBL" id="AL591478">
    <property type="protein sequence ID" value="CAM15023.1"/>
    <property type="status" value="ALT_INIT"/>
    <property type="molecule type" value="Genomic_DNA"/>
</dbReference>
<dbReference type="EMBL" id="BC141216">
    <property type="protein sequence ID" value="AAI41217.1"/>
    <property type="status" value="ALT_INIT"/>
    <property type="molecule type" value="mRNA"/>
</dbReference>
<dbReference type="CCDS" id="CCDS17046.2"/>
<dbReference type="RefSeq" id="NP_001012743.2">
    <property type="nucleotide sequence ID" value="NM_001012725.3"/>
</dbReference>
<dbReference type="SMR" id="F6ULY1"/>
<dbReference type="FunCoup" id="F6ULY1">
    <property type="interactions" value="207"/>
</dbReference>
<dbReference type="STRING" id="10090.ENSMUSP00000091906"/>
<dbReference type="MEROPS" id="I02.976"/>
<dbReference type="MEROPS" id="I17.953"/>
<dbReference type="PaxDb" id="10090-ENSMUSP00000091906"/>
<dbReference type="ProteomicsDB" id="299978"/>
<dbReference type="DNASU" id="433502"/>
<dbReference type="Ensembl" id="ENSMUST00000094346.3">
    <property type="protein sequence ID" value="ENSMUSP00000091906.3"/>
    <property type="gene ID" value="ENSMUSG00000070531.5"/>
</dbReference>
<dbReference type="GeneID" id="433502"/>
<dbReference type="KEGG" id="mmu:433502"/>
<dbReference type="UCSC" id="uc008nvl.2">
    <property type="organism name" value="mouse"/>
</dbReference>
<dbReference type="AGR" id="MGI:3575430"/>
<dbReference type="CTD" id="433502"/>
<dbReference type="MGI" id="MGI:3575430">
    <property type="gene designation" value="Wfdc6b"/>
</dbReference>
<dbReference type="VEuPathDB" id="HostDB:ENSMUSG00000070531"/>
<dbReference type="eggNOG" id="KOG4295">
    <property type="taxonomic scope" value="Eukaryota"/>
</dbReference>
<dbReference type="GeneTree" id="ENSGT00940000156753"/>
<dbReference type="HOGENOM" id="CLU_127181_0_0_1"/>
<dbReference type="InParanoid" id="F6ULY1"/>
<dbReference type="OMA" id="DVQKRGH"/>
<dbReference type="OrthoDB" id="4473401at2759"/>
<dbReference type="PhylomeDB" id="F6ULY1"/>
<dbReference type="TreeFam" id="TF342459"/>
<dbReference type="BioGRID-ORCS" id="433502">
    <property type="hits" value="2 hits in 75 CRISPR screens"/>
</dbReference>
<dbReference type="PRO" id="PR:F6ULY1"/>
<dbReference type="Proteomes" id="UP000000589">
    <property type="component" value="Chromosome 2"/>
</dbReference>
<dbReference type="RNAct" id="F6ULY1">
    <property type="molecule type" value="protein"/>
</dbReference>
<dbReference type="Bgee" id="ENSMUSG00000070531">
    <property type="expression patterns" value="Expressed in testis and 8 other cell types or tissues"/>
</dbReference>
<dbReference type="GO" id="GO:0005576">
    <property type="term" value="C:extracellular region"/>
    <property type="evidence" value="ECO:0007669"/>
    <property type="project" value="UniProtKB-SubCell"/>
</dbReference>
<dbReference type="GO" id="GO:0004867">
    <property type="term" value="F:serine-type endopeptidase inhibitor activity"/>
    <property type="evidence" value="ECO:0007669"/>
    <property type="project" value="UniProtKB-KW"/>
</dbReference>
<dbReference type="CDD" id="cd22611">
    <property type="entry name" value="Kunitz_eppin"/>
    <property type="match status" value="1"/>
</dbReference>
<dbReference type="FunFam" id="4.10.410.10:FF:000015">
    <property type="entry name" value="WAP four-disulfide core domain 6A"/>
    <property type="match status" value="1"/>
</dbReference>
<dbReference type="FunFam" id="4.10.75.10:FF:000004">
    <property type="entry name" value="WAP four-disulfide core domain 6A"/>
    <property type="match status" value="1"/>
</dbReference>
<dbReference type="Gene3D" id="4.10.75.10">
    <property type="entry name" value="Elafin-like"/>
    <property type="match status" value="1"/>
</dbReference>
<dbReference type="Gene3D" id="4.10.410.10">
    <property type="entry name" value="Pancreatic trypsin inhibitor Kunitz domain"/>
    <property type="match status" value="1"/>
</dbReference>
<dbReference type="InterPro" id="IPR036645">
    <property type="entry name" value="Elafin-like_sf"/>
</dbReference>
<dbReference type="InterPro" id="IPR002223">
    <property type="entry name" value="Kunitz_BPTI"/>
</dbReference>
<dbReference type="InterPro" id="IPR036880">
    <property type="entry name" value="Kunitz_BPTI_sf"/>
</dbReference>
<dbReference type="InterPro" id="IPR020901">
    <property type="entry name" value="Prtase_inh_Kunz-CS"/>
</dbReference>
<dbReference type="InterPro" id="IPR051388">
    <property type="entry name" value="Serpin_venom_toxin"/>
</dbReference>
<dbReference type="InterPro" id="IPR008197">
    <property type="entry name" value="WAP_dom"/>
</dbReference>
<dbReference type="PANTHER" id="PTHR46751">
    <property type="entry name" value="EPPIN"/>
    <property type="match status" value="1"/>
</dbReference>
<dbReference type="PANTHER" id="PTHR46751:SF3">
    <property type="entry name" value="WAP FOUR-DISULFIDE CORE DOMAIN PROTEIN 6B"/>
    <property type="match status" value="1"/>
</dbReference>
<dbReference type="Pfam" id="PF00014">
    <property type="entry name" value="Kunitz_BPTI"/>
    <property type="match status" value="1"/>
</dbReference>
<dbReference type="Pfam" id="PF00095">
    <property type="entry name" value="WAP"/>
    <property type="match status" value="1"/>
</dbReference>
<dbReference type="PRINTS" id="PR00759">
    <property type="entry name" value="BASICPTASE"/>
</dbReference>
<dbReference type="SMART" id="SM00131">
    <property type="entry name" value="KU"/>
    <property type="match status" value="1"/>
</dbReference>
<dbReference type="SUPFAM" id="SSF57362">
    <property type="entry name" value="BPTI-like"/>
    <property type="match status" value="1"/>
</dbReference>
<dbReference type="SUPFAM" id="SSF57256">
    <property type="entry name" value="Elafin-like"/>
    <property type="match status" value="1"/>
</dbReference>
<dbReference type="PROSITE" id="PS00280">
    <property type="entry name" value="BPTI_KUNITZ_1"/>
    <property type="match status" value="1"/>
</dbReference>
<dbReference type="PROSITE" id="PS50279">
    <property type="entry name" value="BPTI_KUNITZ_2"/>
    <property type="match status" value="1"/>
</dbReference>
<dbReference type="PROSITE" id="PS51390">
    <property type="entry name" value="WAP"/>
    <property type="match status" value="1"/>
</dbReference>
<keyword id="KW-1015">Disulfide bond</keyword>
<keyword id="KW-0646">Protease inhibitor</keyword>
<keyword id="KW-1185">Reference proteome</keyword>
<keyword id="KW-0964">Secreted</keyword>
<keyword id="KW-0722">Serine protease inhibitor</keyword>
<keyword id="KW-0732">Signal</keyword>
<comment type="subcellular location">
    <subcellularLocation>
        <location evidence="5">Secreted</location>
    </subcellularLocation>
</comment>
<comment type="sequence caution" evidence="5">
    <conflict type="erroneous initiation">
        <sequence resource="EMBL-CDS" id="AAI41217"/>
    </conflict>
    <text>Truncated N-terminus.</text>
</comment>
<comment type="sequence caution" evidence="5">
    <conflict type="erroneous initiation">
        <sequence resource="EMBL-CDS" id="AAT07038"/>
    </conflict>
    <text>Truncated N-terminus.</text>
</comment>
<comment type="sequence caution" evidence="5">
    <conflict type="erroneous initiation">
        <sequence resource="EMBL-CDS" id="CAM15023"/>
    </conflict>
    <text>Truncated N-terminus.</text>
</comment>